<reference key="1">
    <citation type="journal article" date="2009" name="Genome Res.">
        <title>Comparative genomic analyses of the human fungal pathogens Coccidioides and their relatives.</title>
        <authorList>
            <person name="Sharpton T.J."/>
            <person name="Stajich J.E."/>
            <person name="Rounsley S.D."/>
            <person name="Gardner M.J."/>
            <person name="Wortman J.R."/>
            <person name="Jordar V.S."/>
            <person name="Maiti R."/>
            <person name="Kodira C.D."/>
            <person name="Neafsey D.E."/>
            <person name="Zeng Q."/>
            <person name="Hung C.-Y."/>
            <person name="McMahan C."/>
            <person name="Muszewska A."/>
            <person name="Grynberg M."/>
            <person name="Mandel M.A."/>
            <person name="Kellner E.M."/>
            <person name="Barker B.M."/>
            <person name="Galgiani J.N."/>
            <person name="Orbach M.J."/>
            <person name="Kirkland T.N."/>
            <person name="Cole G.T."/>
            <person name="Henn M.R."/>
            <person name="Birren B.W."/>
            <person name="Taylor J.W."/>
        </authorList>
    </citation>
    <scope>NUCLEOTIDE SEQUENCE [LARGE SCALE GENOMIC DNA]</scope>
    <source>
        <strain>RS</strain>
    </source>
</reference>
<reference key="2">
    <citation type="journal article" date="2010" name="Genome Res.">
        <title>Population genomic sequencing of Coccidioides fungi reveals recent hybridization and transposon control.</title>
        <authorList>
            <person name="Neafsey D.E."/>
            <person name="Barker B.M."/>
            <person name="Sharpton T.J."/>
            <person name="Stajich J.E."/>
            <person name="Park D.J."/>
            <person name="Whiston E."/>
            <person name="Hung C.-Y."/>
            <person name="McMahan C."/>
            <person name="White J."/>
            <person name="Sykes S."/>
            <person name="Heiman D."/>
            <person name="Young S."/>
            <person name="Zeng Q."/>
            <person name="Abouelleil A."/>
            <person name="Aftuck L."/>
            <person name="Bessette D."/>
            <person name="Brown A."/>
            <person name="FitzGerald M."/>
            <person name="Lui A."/>
            <person name="Macdonald J.P."/>
            <person name="Priest M."/>
            <person name="Orbach M.J."/>
            <person name="Galgiani J.N."/>
            <person name="Kirkland T.N."/>
            <person name="Cole G.T."/>
            <person name="Birren B.W."/>
            <person name="Henn M.R."/>
            <person name="Taylor J.W."/>
            <person name="Rounsley S.D."/>
        </authorList>
    </citation>
    <scope>GENOME REANNOTATION</scope>
    <source>
        <strain>RS</strain>
    </source>
</reference>
<comment type="function">
    <text evidence="1">Catalyzes the first intracellular reaction of sulfate assimilation, forming adenosine-5'-phosphosulfate (APS) from inorganic sulfate and ATP. Plays an important role in sulfate activation as a component of the biosynthesis pathway of sulfur-containing amino acids.</text>
</comment>
<comment type="catalytic activity">
    <reaction evidence="1">
        <text>sulfate + ATP + H(+) = adenosine 5'-phosphosulfate + diphosphate</text>
        <dbReference type="Rhea" id="RHEA:18133"/>
        <dbReference type="ChEBI" id="CHEBI:15378"/>
        <dbReference type="ChEBI" id="CHEBI:16189"/>
        <dbReference type="ChEBI" id="CHEBI:30616"/>
        <dbReference type="ChEBI" id="CHEBI:33019"/>
        <dbReference type="ChEBI" id="CHEBI:58243"/>
        <dbReference type="EC" id="2.7.7.4"/>
    </reaction>
</comment>
<comment type="activity regulation">
    <text evidence="1">Allosterically inhibited by 3'-phosphoadenosine 5'-phosphosulfate (PAPS).</text>
</comment>
<comment type="pathway">
    <text evidence="1">Sulfur metabolism; hydrogen sulfide biosynthesis; sulfite from sulfate: step 1/3.</text>
</comment>
<comment type="subunit">
    <text evidence="1">Homohexamer. Dimer of trimers.</text>
</comment>
<comment type="subcellular location">
    <subcellularLocation>
        <location evidence="1">Cytoplasm</location>
    </subcellularLocation>
</comment>
<comment type="domain">
    <text evidence="1">The adenylyl-sulfate kinase (APS kinase) is non-functional. It is involved in allosteric regulation by PAPS. PAPS binding induces a large rotational rearrangement of domains lowering the substrate affinity of the enzyme.</text>
</comment>
<comment type="similarity">
    <text evidence="1">In the N-terminal section; belongs to the sulfate adenylyltransferase family.</text>
</comment>
<comment type="similarity">
    <text evidence="1">In the C-terminal section; belongs to the APS kinase family.</text>
</comment>
<accession>Q1EAF9</accession>
<accession>J3KH27</accession>
<name>MET3_COCIM</name>
<sequence>MANPPHGGILKDLLARDAPRHAELEAEAETLPALLLTERHLCDLELILNGGFSPLEGFMNEKDYNGVVENVRLADGNLFSIPITLDASKETIDGLGLQPGSRVTLRDFRDDRNLAILTIDDIYQPDKQKEAKEVFGGDPEHPAVKYLYDQTNEYYIGGKVEAVNKLNHYDYVGLRFTPAELRLHFDKLGWTRVVAFQTRNPMHRAHRELTVRAARARQANVLIHPVVGLTKPGDIDHFTRVRVYEALLPRYPNGMAVLGLLPLAMRMGGPREAIWHAIIRKNHGATHFIVGRDHAGPGKNSKGEEFYGPYDAQHAVEKYRHELGIEVVEFQQLTYLPDTDEYKPRDEIPAGVKTLDISGTELRKRLRLGTHIPEWFSYPEVVKVLRESNPPRSKQGFTVFLTGYQNSGKAAIARALQVTLNQQGGRSVSLLLGDTVRHELSAELGFSREDRHKNIQRIAFVAAELTKAGAAVIAAPIAPYEESRQQARETISSAGTFFLVHVATSLEYAEKTDKRGVYARARRGEIKGFTGVDDPYETPQKPDITVDIEKQTVRSAVHEIILLLESQGFLEKA</sequence>
<dbReference type="EC" id="2.7.7.4" evidence="1"/>
<dbReference type="EMBL" id="GG704911">
    <property type="protein sequence ID" value="EAS35100.1"/>
    <property type="molecule type" value="Genomic_DNA"/>
</dbReference>
<dbReference type="RefSeq" id="XP_001246683.1">
    <property type="nucleotide sequence ID" value="XM_001246682.2"/>
</dbReference>
<dbReference type="SMR" id="Q1EAF9"/>
<dbReference type="FunCoup" id="Q1EAF9">
    <property type="interactions" value="548"/>
</dbReference>
<dbReference type="STRING" id="246410.Q1EAF9"/>
<dbReference type="GeneID" id="4566317"/>
<dbReference type="KEGG" id="cim:CIMG_00454"/>
<dbReference type="VEuPathDB" id="FungiDB:CIMG_00454"/>
<dbReference type="InParanoid" id="Q1EAF9"/>
<dbReference type="OMA" id="MEMRYAG"/>
<dbReference type="OrthoDB" id="468at2759"/>
<dbReference type="UniPathway" id="UPA00140">
    <property type="reaction ID" value="UER00204"/>
</dbReference>
<dbReference type="Proteomes" id="UP000001261">
    <property type="component" value="Unassembled WGS sequence"/>
</dbReference>
<dbReference type="GO" id="GO:0005737">
    <property type="term" value="C:cytoplasm"/>
    <property type="evidence" value="ECO:0007669"/>
    <property type="project" value="UniProtKB-SubCell"/>
</dbReference>
<dbReference type="GO" id="GO:0004020">
    <property type="term" value="F:adenylylsulfate kinase activity"/>
    <property type="evidence" value="ECO:0007669"/>
    <property type="project" value="InterPro"/>
</dbReference>
<dbReference type="GO" id="GO:0005524">
    <property type="term" value="F:ATP binding"/>
    <property type="evidence" value="ECO:0007669"/>
    <property type="project" value="UniProtKB-KW"/>
</dbReference>
<dbReference type="GO" id="GO:0004781">
    <property type="term" value="F:sulfate adenylyltransferase (ATP) activity"/>
    <property type="evidence" value="ECO:0007669"/>
    <property type="project" value="UniProtKB-UniRule"/>
</dbReference>
<dbReference type="GO" id="GO:0019344">
    <property type="term" value="P:cysteine biosynthetic process"/>
    <property type="evidence" value="ECO:0007669"/>
    <property type="project" value="UniProtKB-KW"/>
</dbReference>
<dbReference type="GO" id="GO:0070814">
    <property type="term" value="P:hydrogen sulfide biosynthetic process"/>
    <property type="evidence" value="ECO:0007669"/>
    <property type="project" value="UniProtKB-UniRule"/>
</dbReference>
<dbReference type="GO" id="GO:0009086">
    <property type="term" value="P:methionine biosynthetic process"/>
    <property type="evidence" value="ECO:0007669"/>
    <property type="project" value="UniProtKB-KW"/>
</dbReference>
<dbReference type="GO" id="GO:0010134">
    <property type="term" value="P:sulfate assimilation via adenylyl sulfate reduction"/>
    <property type="evidence" value="ECO:0007669"/>
    <property type="project" value="TreeGrafter"/>
</dbReference>
<dbReference type="GO" id="GO:0019379">
    <property type="term" value="P:sulfate assimilation, phosphoadenylyl sulfate reduction by phosphoadenylyl-sulfate reductase (thioredoxin)"/>
    <property type="evidence" value="ECO:0007669"/>
    <property type="project" value="TreeGrafter"/>
</dbReference>
<dbReference type="CDD" id="cd02027">
    <property type="entry name" value="APSK"/>
    <property type="match status" value="1"/>
</dbReference>
<dbReference type="CDD" id="cd00517">
    <property type="entry name" value="ATPS"/>
    <property type="match status" value="1"/>
</dbReference>
<dbReference type="FunFam" id="3.10.400.10:FF:000003">
    <property type="entry name" value="Sulfate adenylyltransferase"/>
    <property type="match status" value="1"/>
</dbReference>
<dbReference type="FunFam" id="3.40.50.300:FF:000802">
    <property type="entry name" value="Sulfate adenylyltransferase"/>
    <property type="match status" value="1"/>
</dbReference>
<dbReference type="FunFam" id="3.40.50.620:FF:000052">
    <property type="entry name" value="Sulfate adenylyltransferase"/>
    <property type="match status" value="1"/>
</dbReference>
<dbReference type="Gene3D" id="3.40.50.620">
    <property type="entry name" value="HUPs"/>
    <property type="match status" value="1"/>
</dbReference>
<dbReference type="Gene3D" id="3.40.50.300">
    <property type="entry name" value="P-loop containing nucleotide triphosphate hydrolases"/>
    <property type="match status" value="1"/>
</dbReference>
<dbReference type="Gene3D" id="3.10.400.10">
    <property type="entry name" value="Sulfate adenylyltransferase"/>
    <property type="match status" value="1"/>
</dbReference>
<dbReference type="HAMAP" id="MF_03106">
    <property type="entry name" value="Sulf_adenylyltr_euk"/>
    <property type="match status" value="1"/>
</dbReference>
<dbReference type="InterPro" id="IPR002891">
    <property type="entry name" value="APS_kinase"/>
</dbReference>
<dbReference type="InterPro" id="IPR025980">
    <property type="entry name" value="ATP-Sase_PUA-like_dom"/>
</dbReference>
<dbReference type="InterPro" id="IPR027417">
    <property type="entry name" value="P-loop_NTPase"/>
</dbReference>
<dbReference type="InterPro" id="IPR015947">
    <property type="entry name" value="PUA-like_sf"/>
</dbReference>
<dbReference type="InterPro" id="IPR014729">
    <property type="entry name" value="Rossmann-like_a/b/a_fold"/>
</dbReference>
<dbReference type="InterPro" id="IPR027535">
    <property type="entry name" value="Sulf_adenylyltr_euk"/>
</dbReference>
<dbReference type="InterPro" id="IPR050512">
    <property type="entry name" value="Sulf_AdTrans/APS_kinase"/>
</dbReference>
<dbReference type="InterPro" id="IPR024951">
    <property type="entry name" value="Sulfurylase_cat_dom"/>
</dbReference>
<dbReference type="InterPro" id="IPR002650">
    <property type="entry name" value="Sulphate_adenylyltransferase"/>
</dbReference>
<dbReference type="NCBIfam" id="TIGR00455">
    <property type="entry name" value="apsK"/>
    <property type="match status" value="1"/>
</dbReference>
<dbReference type="NCBIfam" id="NF004040">
    <property type="entry name" value="PRK05537.1"/>
    <property type="match status" value="1"/>
</dbReference>
<dbReference type="NCBIfam" id="TIGR00339">
    <property type="entry name" value="sopT"/>
    <property type="match status" value="1"/>
</dbReference>
<dbReference type="PANTHER" id="PTHR42700">
    <property type="entry name" value="SULFATE ADENYLYLTRANSFERASE"/>
    <property type="match status" value="1"/>
</dbReference>
<dbReference type="PANTHER" id="PTHR42700:SF1">
    <property type="entry name" value="SULFATE ADENYLYLTRANSFERASE"/>
    <property type="match status" value="1"/>
</dbReference>
<dbReference type="Pfam" id="PF01583">
    <property type="entry name" value="APS_kinase"/>
    <property type="match status" value="1"/>
</dbReference>
<dbReference type="Pfam" id="PF01747">
    <property type="entry name" value="ATP-sulfurylase"/>
    <property type="match status" value="1"/>
</dbReference>
<dbReference type="Pfam" id="PF14306">
    <property type="entry name" value="PUA_2"/>
    <property type="match status" value="1"/>
</dbReference>
<dbReference type="SUPFAM" id="SSF52374">
    <property type="entry name" value="Nucleotidylyl transferase"/>
    <property type="match status" value="1"/>
</dbReference>
<dbReference type="SUPFAM" id="SSF52540">
    <property type="entry name" value="P-loop containing nucleoside triphosphate hydrolases"/>
    <property type="match status" value="1"/>
</dbReference>
<dbReference type="SUPFAM" id="SSF88697">
    <property type="entry name" value="PUA domain-like"/>
    <property type="match status" value="1"/>
</dbReference>
<organism>
    <name type="scientific">Coccidioides immitis (strain RS)</name>
    <name type="common">Valley fever fungus</name>
    <dbReference type="NCBI Taxonomy" id="246410"/>
    <lineage>
        <taxon>Eukaryota</taxon>
        <taxon>Fungi</taxon>
        <taxon>Dikarya</taxon>
        <taxon>Ascomycota</taxon>
        <taxon>Pezizomycotina</taxon>
        <taxon>Eurotiomycetes</taxon>
        <taxon>Eurotiomycetidae</taxon>
        <taxon>Onygenales</taxon>
        <taxon>Onygenaceae</taxon>
        <taxon>Coccidioides</taxon>
    </lineage>
</organism>
<gene>
    <name evidence="1" type="primary">MET3</name>
    <name type="ORF">CIMG_00454</name>
</gene>
<protein>
    <recommendedName>
        <fullName evidence="1">Sulfate adenylyltransferase</fullName>
        <ecNumber evidence="1">2.7.7.4</ecNumber>
    </recommendedName>
    <alternativeName>
        <fullName evidence="1">ATP-sulfurylase</fullName>
    </alternativeName>
    <alternativeName>
        <fullName evidence="1">Sulfate adenylate transferase</fullName>
        <shortName evidence="1">SAT</shortName>
    </alternativeName>
</protein>
<keyword id="KW-0021">Allosteric enzyme</keyword>
<keyword id="KW-0028">Amino-acid biosynthesis</keyword>
<keyword id="KW-0067">ATP-binding</keyword>
<keyword id="KW-0198">Cysteine biosynthesis</keyword>
<keyword id="KW-0963">Cytoplasm</keyword>
<keyword id="KW-0486">Methionine biosynthesis</keyword>
<keyword id="KW-0547">Nucleotide-binding</keyword>
<keyword id="KW-0548">Nucleotidyltransferase</keyword>
<keyword id="KW-1185">Reference proteome</keyword>
<keyword id="KW-0808">Transferase</keyword>
<feature type="chain" id="PRO_0000283682" description="Sulfate adenylyltransferase">
    <location>
        <begin position="1"/>
        <end position="573"/>
    </location>
</feature>
<feature type="region of interest" description="N-terminal" evidence="1">
    <location>
        <begin position="1"/>
        <end position="169"/>
    </location>
</feature>
<feature type="region of interest" description="Catalytic" evidence="1">
    <location>
        <begin position="170"/>
        <end position="394"/>
    </location>
</feature>
<feature type="region of interest" description="Allosteric regulation domain; adenylyl-sulfate kinase-like" evidence="1">
    <location>
        <begin position="395"/>
        <end position="573"/>
    </location>
</feature>
<feature type="active site" evidence="1">
    <location>
        <position position="198"/>
    </location>
</feature>
<feature type="active site" evidence="1">
    <location>
        <position position="199"/>
    </location>
</feature>
<feature type="active site" evidence="1">
    <location>
        <position position="200"/>
    </location>
</feature>
<feature type="binding site" evidence="1">
    <location>
        <begin position="197"/>
        <end position="200"/>
    </location>
    <ligand>
        <name>ATP</name>
        <dbReference type="ChEBI" id="CHEBI:30616"/>
    </ligand>
</feature>
<feature type="binding site" evidence="1">
    <location>
        <position position="197"/>
    </location>
    <ligand>
        <name>sulfate</name>
        <dbReference type="ChEBI" id="CHEBI:16189"/>
    </ligand>
</feature>
<feature type="binding site" evidence="1">
    <location>
        <position position="199"/>
    </location>
    <ligand>
        <name>sulfate</name>
        <dbReference type="ChEBI" id="CHEBI:16189"/>
    </ligand>
</feature>
<feature type="binding site" evidence="1">
    <location>
        <begin position="291"/>
        <end position="294"/>
    </location>
    <ligand>
        <name>ATP</name>
        <dbReference type="ChEBI" id="CHEBI:30616"/>
    </ligand>
</feature>
<feature type="binding site" evidence="1">
    <location>
        <position position="295"/>
    </location>
    <ligand>
        <name>sulfate</name>
        <dbReference type="ChEBI" id="CHEBI:16189"/>
    </ligand>
</feature>
<feature type="binding site" evidence="1">
    <location>
        <position position="333"/>
    </location>
    <ligand>
        <name>ATP</name>
        <dbReference type="ChEBI" id="CHEBI:30616"/>
    </ligand>
</feature>
<feature type="binding site" evidence="1">
    <location>
        <begin position="434"/>
        <end position="437"/>
    </location>
    <ligand>
        <name>3'-phosphoadenylyl sulfate</name>
        <dbReference type="ChEBI" id="CHEBI:58339"/>
        <note>allosteric inhibitor</note>
    </ligand>
</feature>
<feature type="binding site" evidence="1">
    <location>
        <position position="451"/>
    </location>
    <ligand>
        <name>3'-phosphoadenylyl sulfate</name>
        <dbReference type="ChEBI" id="CHEBI:58339"/>
        <note>allosteric inhibitor</note>
    </ligand>
</feature>
<feature type="binding site" evidence="1">
    <location>
        <begin position="477"/>
        <end position="478"/>
    </location>
    <ligand>
        <name>3'-phosphoadenylyl sulfate</name>
        <dbReference type="ChEBI" id="CHEBI:58339"/>
        <note>allosteric inhibitor</note>
    </ligand>
</feature>
<feature type="binding site" evidence="1">
    <location>
        <position position="515"/>
    </location>
    <ligand>
        <name>3'-phosphoadenylyl sulfate</name>
        <dbReference type="ChEBI" id="CHEBI:58339"/>
        <note>allosteric inhibitor</note>
    </ligand>
</feature>
<feature type="site" description="Transition state stabilizer" evidence="1">
    <location>
        <position position="203"/>
    </location>
</feature>
<feature type="site" description="Transition state stabilizer" evidence="1">
    <location>
        <position position="206"/>
    </location>
</feature>
<feature type="site" description="Induces change in substrate recognition on ATP binding" evidence="1">
    <location>
        <position position="330"/>
    </location>
</feature>
<proteinExistence type="inferred from homology"/>
<evidence type="ECO:0000255" key="1">
    <source>
        <dbReference type="HAMAP-Rule" id="MF_03106"/>
    </source>
</evidence>